<accession>A8A3W0</accession>
<feature type="chain" id="PRO_1000057060" description="Thymidylate synthase">
    <location>
        <begin position="1"/>
        <end position="264"/>
    </location>
</feature>
<feature type="active site" description="Nucleophile" evidence="1">
    <location>
        <position position="146"/>
    </location>
</feature>
<feature type="binding site" description="in other chain" evidence="1">
    <location>
        <position position="21"/>
    </location>
    <ligand>
        <name>dUMP</name>
        <dbReference type="ChEBI" id="CHEBI:246422"/>
        <note>ligand shared between dimeric partners</note>
    </ligand>
</feature>
<feature type="binding site" evidence="1">
    <location>
        <position position="51"/>
    </location>
    <ligand>
        <name>(6R)-5,10-methylene-5,6,7,8-tetrahydrofolate</name>
        <dbReference type="ChEBI" id="CHEBI:15636"/>
    </ligand>
</feature>
<feature type="binding site" evidence="1">
    <location>
        <begin position="126"/>
        <end position="127"/>
    </location>
    <ligand>
        <name>dUMP</name>
        <dbReference type="ChEBI" id="CHEBI:246422"/>
        <note>ligand shared between dimeric partners</note>
    </ligand>
</feature>
<feature type="binding site" description="in other chain" evidence="1">
    <location>
        <begin position="166"/>
        <end position="169"/>
    </location>
    <ligand>
        <name>dUMP</name>
        <dbReference type="ChEBI" id="CHEBI:246422"/>
        <note>ligand shared between dimeric partners</note>
    </ligand>
</feature>
<feature type="binding site" evidence="1">
    <location>
        <position position="169"/>
    </location>
    <ligand>
        <name>(6R)-5,10-methylene-5,6,7,8-tetrahydrofolate</name>
        <dbReference type="ChEBI" id="CHEBI:15636"/>
    </ligand>
</feature>
<feature type="binding site" description="in other chain" evidence="1">
    <location>
        <position position="177"/>
    </location>
    <ligand>
        <name>dUMP</name>
        <dbReference type="ChEBI" id="CHEBI:246422"/>
        <note>ligand shared between dimeric partners</note>
    </ligand>
</feature>
<feature type="binding site" description="in other chain" evidence="1">
    <location>
        <begin position="207"/>
        <end position="209"/>
    </location>
    <ligand>
        <name>dUMP</name>
        <dbReference type="ChEBI" id="CHEBI:246422"/>
        <note>ligand shared between dimeric partners</note>
    </ligand>
</feature>
<feature type="binding site" evidence="1">
    <location>
        <position position="263"/>
    </location>
    <ligand>
        <name>(6R)-5,10-methylene-5,6,7,8-tetrahydrofolate</name>
        <dbReference type="ChEBI" id="CHEBI:15636"/>
    </ligand>
</feature>
<comment type="function">
    <text evidence="1">Catalyzes the reductive methylation of 2'-deoxyuridine-5'-monophosphate (dUMP) to 2'-deoxythymidine-5'-monophosphate (dTMP) while utilizing 5,10-methylenetetrahydrofolate (mTHF) as the methyl donor and reductant in the reaction, yielding dihydrofolate (DHF) as a by-product. This enzymatic reaction provides an intracellular de novo source of dTMP, an essential precursor for DNA biosynthesis.</text>
</comment>
<comment type="catalytic activity">
    <reaction evidence="1">
        <text>dUMP + (6R)-5,10-methylene-5,6,7,8-tetrahydrofolate = 7,8-dihydrofolate + dTMP</text>
        <dbReference type="Rhea" id="RHEA:12104"/>
        <dbReference type="ChEBI" id="CHEBI:15636"/>
        <dbReference type="ChEBI" id="CHEBI:57451"/>
        <dbReference type="ChEBI" id="CHEBI:63528"/>
        <dbReference type="ChEBI" id="CHEBI:246422"/>
        <dbReference type="EC" id="2.1.1.45"/>
    </reaction>
</comment>
<comment type="pathway">
    <text evidence="1">Pyrimidine metabolism; dTTP biosynthesis.</text>
</comment>
<comment type="subunit">
    <text evidence="1">Homodimer.</text>
</comment>
<comment type="subcellular location">
    <subcellularLocation>
        <location evidence="1">Cytoplasm</location>
    </subcellularLocation>
</comment>
<comment type="similarity">
    <text evidence="1">Belongs to the thymidylate synthase family. Bacterial-type ThyA subfamily.</text>
</comment>
<name>TYSY_ECOHS</name>
<evidence type="ECO:0000255" key="1">
    <source>
        <dbReference type="HAMAP-Rule" id="MF_00008"/>
    </source>
</evidence>
<organism>
    <name type="scientific">Escherichia coli O9:H4 (strain HS)</name>
    <dbReference type="NCBI Taxonomy" id="331112"/>
    <lineage>
        <taxon>Bacteria</taxon>
        <taxon>Pseudomonadati</taxon>
        <taxon>Pseudomonadota</taxon>
        <taxon>Gammaproteobacteria</taxon>
        <taxon>Enterobacterales</taxon>
        <taxon>Enterobacteriaceae</taxon>
        <taxon>Escherichia</taxon>
    </lineage>
</organism>
<keyword id="KW-0963">Cytoplasm</keyword>
<keyword id="KW-0489">Methyltransferase</keyword>
<keyword id="KW-0545">Nucleotide biosynthesis</keyword>
<keyword id="KW-0808">Transferase</keyword>
<dbReference type="EC" id="2.1.1.45" evidence="1"/>
<dbReference type="EMBL" id="CP000802">
    <property type="protein sequence ID" value="ABV07214.1"/>
    <property type="molecule type" value="Genomic_DNA"/>
</dbReference>
<dbReference type="RefSeq" id="WP_000816241.1">
    <property type="nucleotide sequence ID" value="NC_009800.1"/>
</dbReference>
<dbReference type="BMRB" id="A8A3W0"/>
<dbReference type="SMR" id="A8A3W0"/>
<dbReference type="KEGG" id="ecx:EcHS_A2973"/>
<dbReference type="HOGENOM" id="CLU_021669_0_0_6"/>
<dbReference type="UniPathway" id="UPA00575"/>
<dbReference type="GO" id="GO:0005829">
    <property type="term" value="C:cytosol"/>
    <property type="evidence" value="ECO:0007669"/>
    <property type="project" value="TreeGrafter"/>
</dbReference>
<dbReference type="GO" id="GO:0004799">
    <property type="term" value="F:thymidylate synthase activity"/>
    <property type="evidence" value="ECO:0007669"/>
    <property type="project" value="UniProtKB-UniRule"/>
</dbReference>
<dbReference type="GO" id="GO:0006231">
    <property type="term" value="P:dTMP biosynthetic process"/>
    <property type="evidence" value="ECO:0007669"/>
    <property type="project" value="UniProtKB-UniRule"/>
</dbReference>
<dbReference type="GO" id="GO:0006235">
    <property type="term" value="P:dTTP biosynthetic process"/>
    <property type="evidence" value="ECO:0007669"/>
    <property type="project" value="UniProtKB-UniRule"/>
</dbReference>
<dbReference type="GO" id="GO:0032259">
    <property type="term" value="P:methylation"/>
    <property type="evidence" value="ECO:0007669"/>
    <property type="project" value="UniProtKB-KW"/>
</dbReference>
<dbReference type="CDD" id="cd00351">
    <property type="entry name" value="TS_Pyrimidine_HMase"/>
    <property type="match status" value="1"/>
</dbReference>
<dbReference type="FunFam" id="3.30.572.10:FF:000001">
    <property type="entry name" value="Thymidylate synthase"/>
    <property type="match status" value="1"/>
</dbReference>
<dbReference type="Gene3D" id="3.30.572.10">
    <property type="entry name" value="Thymidylate synthase/dCMP hydroxymethylase domain"/>
    <property type="match status" value="1"/>
</dbReference>
<dbReference type="HAMAP" id="MF_00008">
    <property type="entry name" value="Thymidy_synth_bact"/>
    <property type="match status" value="1"/>
</dbReference>
<dbReference type="InterPro" id="IPR045097">
    <property type="entry name" value="Thymidate_synth/dCMP_Mease"/>
</dbReference>
<dbReference type="InterPro" id="IPR023451">
    <property type="entry name" value="Thymidate_synth/dCMP_Mease_dom"/>
</dbReference>
<dbReference type="InterPro" id="IPR036926">
    <property type="entry name" value="Thymidate_synth/dCMP_Mease_sf"/>
</dbReference>
<dbReference type="InterPro" id="IPR000398">
    <property type="entry name" value="Thymidylate_synthase"/>
</dbReference>
<dbReference type="InterPro" id="IPR020940">
    <property type="entry name" value="Thymidylate_synthase_AS"/>
</dbReference>
<dbReference type="NCBIfam" id="NF002497">
    <property type="entry name" value="PRK01827.1-3"/>
    <property type="match status" value="1"/>
</dbReference>
<dbReference type="NCBIfam" id="NF002499">
    <property type="entry name" value="PRK01827.1-5"/>
    <property type="match status" value="1"/>
</dbReference>
<dbReference type="NCBIfam" id="TIGR03284">
    <property type="entry name" value="thym_sym"/>
    <property type="match status" value="2"/>
</dbReference>
<dbReference type="PANTHER" id="PTHR11548:SF9">
    <property type="entry name" value="THYMIDYLATE SYNTHASE"/>
    <property type="match status" value="1"/>
</dbReference>
<dbReference type="PANTHER" id="PTHR11548">
    <property type="entry name" value="THYMIDYLATE SYNTHASE 1"/>
    <property type="match status" value="1"/>
</dbReference>
<dbReference type="Pfam" id="PF00303">
    <property type="entry name" value="Thymidylat_synt"/>
    <property type="match status" value="1"/>
</dbReference>
<dbReference type="PRINTS" id="PR00108">
    <property type="entry name" value="THYMDSNTHASE"/>
</dbReference>
<dbReference type="SUPFAM" id="SSF55831">
    <property type="entry name" value="Thymidylate synthase/dCMP hydroxymethylase"/>
    <property type="match status" value="1"/>
</dbReference>
<dbReference type="PROSITE" id="PS00091">
    <property type="entry name" value="THYMIDYLATE_SYNTHASE"/>
    <property type="match status" value="1"/>
</dbReference>
<reference key="1">
    <citation type="journal article" date="2008" name="J. Bacteriol.">
        <title>The pangenome structure of Escherichia coli: comparative genomic analysis of E. coli commensal and pathogenic isolates.</title>
        <authorList>
            <person name="Rasko D.A."/>
            <person name="Rosovitz M.J."/>
            <person name="Myers G.S.A."/>
            <person name="Mongodin E.F."/>
            <person name="Fricke W.F."/>
            <person name="Gajer P."/>
            <person name="Crabtree J."/>
            <person name="Sebaihia M."/>
            <person name="Thomson N.R."/>
            <person name="Chaudhuri R."/>
            <person name="Henderson I.R."/>
            <person name="Sperandio V."/>
            <person name="Ravel J."/>
        </authorList>
    </citation>
    <scope>NUCLEOTIDE SEQUENCE [LARGE SCALE GENOMIC DNA]</scope>
    <source>
        <strain>HS</strain>
    </source>
</reference>
<gene>
    <name evidence="1" type="primary">thyA</name>
    <name type="ordered locus">EcHS_A2973</name>
</gene>
<sequence>MKQYLELMQKVLDEGTQKNDRTGTGTLSIFGHQMRFNLQDGFPLVTTKRCHLRSIIHELLWFLQGNTNIAYLHENNVTIWDEWADENGDLGPVYGKQWRAWPTPDGRHIDQITTVLNQLKNDPDSRRIIVSAWNVGELDKMALAPCHAFFQFYVADGKLSCQLYQRSCDVFLGLPFNIASYALLVHMMAQQCDLEVGDFVWTGGDTHLYSNHMDQTHLQLSREPRPLPKLIIKRKPESIFDYRFEDFEIEGYDPHPGIKAPVAI</sequence>
<proteinExistence type="inferred from homology"/>
<protein>
    <recommendedName>
        <fullName evidence="1">Thymidylate synthase</fullName>
        <shortName evidence="1">TS</shortName>
        <shortName evidence="1">TSase</shortName>
        <ecNumber evidence="1">2.1.1.45</ecNumber>
    </recommendedName>
</protein>